<feature type="signal peptide" evidence="2">
    <location>
        <begin position="1"/>
        <end position="29"/>
    </location>
</feature>
<feature type="propeptide" id="PRO_0000003775" evidence="2">
    <location>
        <begin position="30"/>
        <end position="61"/>
    </location>
</feature>
<feature type="chain" id="PRO_0000003776" description="Cadherin-8">
    <location>
        <begin position="62"/>
        <end position="799"/>
    </location>
</feature>
<feature type="topological domain" description="Extracellular" evidence="2">
    <location>
        <begin position="62"/>
        <end position="621"/>
    </location>
</feature>
<feature type="transmembrane region" description="Helical" evidence="2">
    <location>
        <begin position="622"/>
        <end position="642"/>
    </location>
</feature>
<feature type="topological domain" description="Cytoplasmic" evidence="2">
    <location>
        <begin position="643"/>
        <end position="799"/>
    </location>
</feature>
<feature type="domain" description="Cadherin 1" evidence="3">
    <location>
        <begin position="62"/>
        <end position="167"/>
    </location>
</feature>
<feature type="domain" description="Cadherin 2" evidence="3">
    <location>
        <begin position="168"/>
        <end position="276"/>
    </location>
</feature>
<feature type="domain" description="Cadherin 3" evidence="3">
    <location>
        <begin position="277"/>
        <end position="391"/>
    </location>
</feature>
<feature type="domain" description="Cadherin 4" evidence="3">
    <location>
        <begin position="392"/>
        <end position="494"/>
    </location>
</feature>
<feature type="domain" description="Cadherin 5" evidence="3">
    <location>
        <begin position="495"/>
        <end position="616"/>
    </location>
</feature>
<feature type="modified residue" description="Phosphoserine" evidence="5">
    <location>
        <position position="795"/>
    </location>
</feature>
<feature type="glycosylation site" description="N-linked (GlcNAc...) asparagine" evidence="2">
    <location>
        <position position="188"/>
    </location>
</feature>
<feature type="glycosylation site" description="N-linked (GlcNAc...) asparagine" evidence="2">
    <location>
        <position position="463"/>
    </location>
</feature>
<feature type="glycosylation site" description="N-linked (GlcNAc...) asparagine" evidence="2">
    <location>
        <position position="473"/>
    </location>
</feature>
<feature type="glycosylation site" description="N-linked (GlcNAc...) asparagine" evidence="2">
    <location>
        <position position="544"/>
    </location>
</feature>
<feature type="sequence conflict" description="In Ref. 1; CAA64857." evidence="4" ref="1">
    <original>K</original>
    <variation>I</variation>
    <location>
        <position position="247"/>
    </location>
</feature>
<feature type="strand" evidence="6">
    <location>
        <begin position="67"/>
        <end position="70"/>
    </location>
</feature>
<feature type="helix" evidence="6">
    <location>
        <begin position="72"/>
        <end position="74"/>
    </location>
</feature>
<feature type="strand" evidence="6">
    <location>
        <begin position="76"/>
        <end position="78"/>
    </location>
</feature>
<feature type="strand" evidence="6">
    <location>
        <begin position="80"/>
        <end position="84"/>
    </location>
</feature>
<feature type="strand" evidence="6">
    <location>
        <begin position="96"/>
        <end position="102"/>
    </location>
</feature>
<feature type="turn" evidence="6">
    <location>
        <begin position="106"/>
        <end position="108"/>
    </location>
</feature>
<feature type="strand" evidence="6">
    <location>
        <begin position="109"/>
        <end position="111"/>
    </location>
</feature>
<feature type="turn" evidence="6">
    <location>
        <begin position="113"/>
        <end position="115"/>
    </location>
</feature>
<feature type="strand" evidence="6">
    <location>
        <begin position="117"/>
        <end position="120"/>
    </location>
</feature>
<feature type="turn" evidence="6">
    <location>
        <begin position="126"/>
        <end position="128"/>
    </location>
</feature>
<feature type="strand" evidence="6">
    <location>
        <begin position="130"/>
        <end position="140"/>
    </location>
</feature>
<feature type="turn" evidence="6">
    <location>
        <begin position="141"/>
        <end position="143"/>
    </location>
</feature>
<feature type="strand" evidence="6">
    <location>
        <begin position="146"/>
        <end position="148"/>
    </location>
</feature>
<feature type="strand" evidence="6">
    <location>
        <begin position="151"/>
        <end position="157"/>
    </location>
</feature>
<evidence type="ECO:0000250" key="1"/>
<evidence type="ECO:0000255" key="2"/>
<evidence type="ECO:0000255" key="3">
    <source>
        <dbReference type="PROSITE-ProRule" id="PRU00043"/>
    </source>
</evidence>
<evidence type="ECO:0000305" key="4"/>
<evidence type="ECO:0007744" key="5">
    <source>
    </source>
</evidence>
<evidence type="ECO:0007829" key="6">
    <source>
        <dbReference type="PDB" id="1ZXK"/>
    </source>
</evidence>
<proteinExistence type="evidence at protein level"/>
<sequence length="799" mass="88215">MPERLAETLMDLWTPLIILWITLPSCVYTAPMNQAHVLTTGSPLELSRQSEDMRILSRSKRGWVWNQMFVLEEFSGPEPILVGRLHTDLDPGSKKIKYILSGDGAGTIFQINDITGDIHAIKRLDREEKAEYTLTAQAVDFETNKPLEPPSEFIIKVQDINDNAPEFLNGPYHATVPEMSILGTSVTNVTATDADDPVYGNSAKLVYSILEGQPYFSIEPETAIIKTALPNMDREAKEEYLVVIQAKDMGGHSGGLSGTTTLTVTLTDVNDNPPKFAQSLYHFSVPEDVVLGTAIGRVKANDQDIGENAQSSYDIIDGDGTALFEITSDAQAQDGVIRLRKPLDFETKKSYTLKVEAANIHIDPRFSSRGPFKDTATVKIVVEDADEPPVFSSPTYLLEVHENAALNSVIGQVTARDPDITSSPIRFSIDRHTDLERQFNINADDGKITLATPLDRELSVWHNITIIATEIRNHSQISRVPVAIKVLDVNDNAPEFASEYEAFLCENGKPGQVIQTVSAMDKDDPKNGHFFLYSLLPEMVNNPNFTIKKNEDNSLSILAKHNGFNRQKQEVYLLPIVISDSGNPPLSSTSTLTIRVCGCSNDGVVQSCNVEAYVLPIGLSMGALIAILACIILLLVIVVLFVTLRRHKNEPLIIKDDEDVRENIIRYDDEGGGEEDTEAFDIATLQNPDGINGFLPRKDIKPDLQFMPRQGLAPVPNGVDVDEFINVRLHEADNDPTAPPYDSIQIYGYEGRGSVAGSLSSLESTTSDSDQNFDYLSDWGPRFKRLGELYSVGESDKET</sequence>
<gene>
    <name type="primary">Cdh8</name>
</gene>
<reference key="1">
    <citation type="journal article" date="1997" name="Dev. Dyn.">
        <title>Restricted expression of cadherin-8 in segmental and functional subdivisions of the embryonic mouse brain.</title>
        <authorList>
            <person name="Korematsu K."/>
            <person name="Redies C."/>
        </authorList>
    </citation>
    <scope>NUCLEOTIDE SEQUENCE [MRNA]</scope>
    <source>
        <strain>Swiss Webster / NIH</strain>
    </source>
</reference>
<reference key="2">
    <citation type="journal article" date="2009" name="PLoS Biol.">
        <title>Lineage-specific biology revealed by a finished genome assembly of the mouse.</title>
        <authorList>
            <person name="Church D.M."/>
            <person name="Goodstadt L."/>
            <person name="Hillier L.W."/>
            <person name="Zody M.C."/>
            <person name="Goldstein S."/>
            <person name="She X."/>
            <person name="Bult C.J."/>
            <person name="Agarwala R."/>
            <person name="Cherry J.L."/>
            <person name="DiCuccio M."/>
            <person name="Hlavina W."/>
            <person name="Kapustin Y."/>
            <person name="Meric P."/>
            <person name="Maglott D."/>
            <person name="Birtle Z."/>
            <person name="Marques A.C."/>
            <person name="Graves T."/>
            <person name="Zhou S."/>
            <person name="Teague B."/>
            <person name="Potamousis K."/>
            <person name="Churas C."/>
            <person name="Place M."/>
            <person name="Herschleb J."/>
            <person name="Runnheim R."/>
            <person name="Forrest D."/>
            <person name="Amos-Landgraf J."/>
            <person name="Schwartz D.C."/>
            <person name="Cheng Z."/>
            <person name="Lindblad-Toh K."/>
            <person name="Eichler E.E."/>
            <person name="Ponting C.P."/>
        </authorList>
    </citation>
    <scope>NUCLEOTIDE SEQUENCE [LARGE SCALE GENOMIC DNA]</scope>
    <source>
        <strain>C57BL/6J</strain>
    </source>
</reference>
<reference key="3">
    <citation type="submission" date="2005-07" db="EMBL/GenBank/DDBJ databases">
        <authorList>
            <person name="Mural R.J."/>
            <person name="Adams M.D."/>
            <person name="Myers E.W."/>
            <person name="Smith H.O."/>
            <person name="Venter J.C."/>
        </authorList>
    </citation>
    <scope>NUCLEOTIDE SEQUENCE [LARGE SCALE GENOMIC DNA]</scope>
</reference>
<reference key="4">
    <citation type="journal article" date="2010" name="Cell">
        <title>A tissue-specific atlas of mouse protein phosphorylation and expression.</title>
        <authorList>
            <person name="Huttlin E.L."/>
            <person name="Jedrychowski M.P."/>
            <person name="Elias J.E."/>
            <person name="Goswami T."/>
            <person name="Rad R."/>
            <person name="Beausoleil S.A."/>
            <person name="Villen J."/>
            <person name="Haas W."/>
            <person name="Sowa M.E."/>
            <person name="Gygi S.P."/>
        </authorList>
    </citation>
    <scope>PHOSPHORYLATION [LARGE SCALE ANALYSIS] AT SER-795</scope>
    <scope>IDENTIFICATION BY MASS SPECTROMETRY [LARGE SCALE ANALYSIS]</scope>
    <source>
        <tissue>Brain</tissue>
    </source>
</reference>
<accession>P97291</accession>
<accession>G3UVU4</accession>
<name>CADH8_MOUSE</name>
<dbReference type="EMBL" id="X95600">
    <property type="protein sequence ID" value="CAA64857.1"/>
    <property type="molecule type" value="mRNA"/>
</dbReference>
<dbReference type="EMBL" id="AC102643">
    <property type="status" value="NOT_ANNOTATED_CDS"/>
    <property type="molecule type" value="Genomic_DNA"/>
</dbReference>
<dbReference type="EMBL" id="AC103397">
    <property type="status" value="NOT_ANNOTATED_CDS"/>
    <property type="molecule type" value="Genomic_DNA"/>
</dbReference>
<dbReference type="EMBL" id="AC162519">
    <property type="status" value="NOT_ANNOTATED_CDS"/>
    <property type="molecule type" value="Genomic_DNA"/>
</dbReference>
<dbReference type="EMBL" id="AC162867">
    <property type="status" value="NOT_ANNOTATED_CDS"/>
    <property type="molecule type" value="Genomic_DNA"/>
</dbReference>
<dbReference type="EMBL" id="CH466525">
    <property type="protein sequence ID" value="EDL11191.1"/>
    <property type="molecule type" value="Genomic_DNA"/>
</dbReference>
<dbReference type="CCDS" id="CCDS40448.1"/>
<dbReference type="RefSeq" id="NP_031693.2">
    <property type="nucleotide sequence ID" value="NM_007667.3"/>
</dbReference>
<dbReference type="RefSeq" id="XP_006530694.1">
    <property type="nucleotide sequence ID" value="XM_006530631.3"/>
</dbReference>
<dbReference type="RefSeq" id="XP_030099134.1">
    <property type="nucleotide sequence ID" value="XM_030243274.1"/>
</dbReference>
<dbReference type="PDB" id="1ZXK">
    <property type="method" value="X-ray"/>
    <property type="resolution" value="2.00 A"/>
    <property type="chains" value="A/B=62-159"/>
</dbReference>
<dbReference type="PDB" id="2A62">
    <property type="method" value="X-ray"/>
    <property type="resolution" value="4.50 A"/>
    <property type="chains" value="A=63-383"/>
</dbReference>
<dbReference type="PDBsum" id="1ZXK"/>
<dbReference type="PDBsum" id="2A62"/>
<dbReference type="SMR" id="P97291"/>
<dbReference type="DIP" id="DIP-46028N"/>
<dbReference type="FunCoup" id="P97291">
    <property type="interactions" value="237"/>
</dbReference>
<dbReference type="STRING" id="10090.ENSMUSP00000117326"/>
<dbReference type="GlyConnect" id="2172">
    <property type="glycosylation" value="1 N-Linked glycan (1 site)"/>
</dbReference>
<dbReference type="GlyCosmos" id="P97291">
    <property type="glycosylation" value="4 sites, 1 glycan"/>
</dbReference>
<dbReference type="GlyGen" id="P97291">
    <property type="glycosylation" value="4 sites, 3 N-linked glycans (3 sites)"/>
</dbReference>
<dbReference type="iPTMnet" id="P97291"/>
<dbReference type="PhosphoSitePlus" id="P97291"/>
<dbReference type="PaxDb" id="10090-ENSMUSP00000117326"/>
<dbReference type="ProteomicsDB" id="265418"/>
<dbReference type="Antibodypedia" id="2754">
    <property type="antibodies" value="213 antibodies from 27 providers"/>
</dbReference>
<dbReference type="DNASU" id="12564"/>
<dbReference type="Ensembl" id="ENSMUST00000128860.8">
    <property type="protein sequence ID" value="ENSMUSP00000117326.2"/>
    <property type="gene ID" value="ENSMUSG00000036510.18"/>
</dbReference>
<dbReference type="GeneID" id="12564"/>
<dbReference type="KEGG" id="mmu:12564"/>
<dbReference type="UCSC" id="uc009mzo.2">
    <property type="organism name" value="mouse"/>
</dbReference>
<dbReference type="AGR" id="MGI:107434"/>
<dbReference type="CTD" id="1006"/>
<dbReference type="MGI" id="MGI:107434">
    <property type="gene designation" value="Cdh8"/>
</dbReference>
<dbReference type="VEuPathDB" id="HostDB:ENSMUSG00000036510"/>
<dbReference type="eggNOG" id="KOG3594">
    <property type="taxonomic scope" value="Eukaryota"/>
</dbReference>
<dbReference type="GeneTree" id="ENSGT00940000153691"/>
<dbReference type="HOGENOM" id="CLU_005284_3_1_1"/>
<dbReference type="InParanoid" id="P97291"/>
<dbReference type="OMA" id="IYMAPMA"/>
<dbReference type="OrthoDB" id="8188793at2759"/>
<dbReference type="PhylomeDB" id="P97291"/>
<dbReference type="TreeFam" id="TF329887"/>
<dbReference type="Reactome" id="R-MMU-418990">
    <property type="pathway name" value="Adherens junctions interactions"/>
</dbReference>
<dbReference type="BioGRID-ORCS" id="12564">
    <property type="hits" value="3 hits in 79 CRISPR screens"/>
</dbReference>
<dbReference type="ChiTaRS" id="Cdh8">
    <property type="organism name" value="mouse"/>
</dbReference>
<dbReference type="EvolutionaryTrace" id="P97291"/>
<dbReference type="PRO" id="PR:P97291"/>
<dbReference type="Proteomes" id="UP000000589">
    <property type="component" value="Chromosome 8"/>
</dbReference>
<dbReference type="RNAct" id="P97291">
    <property type="molecule type" value="protein"/>
</dbReference>
<dbReference type="Bgee" id="ENSMUSG00000036510">
    <property type="expression patterns" value="Expressed in habenula and 130 other cell types or tissues"/>
</dbReference>
<dbReference type="ExpressionAtlas" id="P97291">
    <property type="expression patterns" value="baseline and differential"/>
</dbReference>
<dbReference type="GO" id="GO:0043679">
    <property type="term" value="C:axon terminus"/>
    <property type="evidence" value="ECO:0000314"/>
    <property type="project" value="MGI"/>
</dbReference>
<dbReference type="GO" id="GO:0098978">
    <property type="term" value="C:glutamatergic synapse"/>
    <property type="evidence" value="ECO:0000314"/>
    <property type="project" value="SynGO"/>
</dbReference>
<dbReference type="GO" id="GO:0005886">
    <property type="term" value="C:plasma membrane"/>
    <property type="evidence" value="ECO:0000304"/>
    <property type="project" value="Reactome"/>
</dbReference>
<dbReference type="GO" id="GO:0043083">
    <property type="term" value="C:synaptic cleft"/>
    <property type="evidence" value="ECO:0000314"/>
    <property type="project" value="MGI"/>
</dbReference>
<dbReference type="GO" id="GO:0097060">
    <property type="term" value="C:synaptic membrane"/>
    <property type="evidence" value="ECO:0000314"/>
    <property type="project" value="SynGO"/>
</dbReference>
<dbReference type="GO" id="GO:0005509">
    <property type="term" value="F:calcium ion binding"/>
    <property type="evidence" value="ECO:0007669"/>
    <property type="project" value="InterPro"/>
</dbReference>
<dbReference type="GO" id="GO:0042802">
    <property type="term" value="F:identical protein binding"/>
    <property type="evidence" value="ECO:0000353"/>
    <property type="project" value="IntAct"/>
</dbReference>
<dbReference type="GO" id="GO:0007268">
    <property type="term" value="P:chemical synaptic transmission"/>
    <property type="evidence" value="ECO:0000315"/>
    <property type="project" value="MGI"/>
</dbReference>
<dbReference type="GO" id="GO:0007156">
    <property type="term" value="P:homophilic cell adhesion via plasma membrane adhesion molecules"/>
    <property type="evidence" value="ECO:0007669"/>
    <property type="project" value="InterPro"/>
</dbReference>
<dbReference type="GO" id="GO:0050807">
    <property type="term" value="P:regulation of synapse organization"/>
    <property type="evidence" value="ECO:0000314"/>
    <property type="project" value="SynGO"/>
</dbReference>
<dbReference type="GO" id="GO:0009409">
    <property type="term" value="P:response to cold"/>
    <property type="evidence" value="ECO:0000315"/>
    <property type="project" value="MGI"/>
</dbReference>
<dbReference type="GO" id="GO:0035249">
    <property type="term" value="P:synaptic transmission, glutamatergic"/>
    <property type="evidence" value="ECO:0000315"/>
    <property type="project" value="MGI"/>
</dbReference>
<dbReference type="CDD" id="cd11304">
    <property type="entry name" value="Cadherin_repeat"/>
    <property type="match status" value="5"/>
</dbReference>
<dbReference type="FunFam" id="4.10.900.10:FF:000001">
    <property type="entry name" value="Cadherin 2"/>
    <property type="match status" value="1"/>
</dbReference>
<dbReference type="FunFam" id="2.60.40.60:FF:000008">
    <property type="entry name" value="Cadherin 24"/>
    <property type="match status" value="1"/>
</dbReference>
<dbReference type="FunFam" id="2.60.40.60:FF:000009">
    <property type="entry name" value="Cadherin 24"/>
    <property type="match status" value="1"/>
</dbReference>
<dbReference type="FunFam" id="2.60.40.60:FF:000012">
    <property type="entry name" value="Cadherin 24"/>
    <property type="match status" value="1"/>
</dbReference>
<dbReference type="FunFam" id="2.60.40.60:FF:000017">
    <property type="entry name" value="Cadherin 24"/>
    <property type="match status" value="1"/>
</dbReference>
<dbReference type="FunFam" id="2.60.40.60:FF:000014">
    <property type="entry name" value="Cadherin 8"/>
    <property type="match status" value="1"/>
</dbReference>
<dbReference type="Gene3D" id="2.60.40.60">
    <property type="entry name" value="Cadherins"/>
    <property type="match status" value="5"/>
</dbReference>
<dbReference type="Gene3D" id="4.10.900.10">
    <property type="entry name" value="TCF3-CBD (Catenin binding domain)"/>
    <property type="match status" value="1"/>
</dbReference>
<dbReference type="InterPro" id="IPR039808">
    <property type="entry name" value="Cadherin"/>
</dbReference>
<dbReference type="InterPro" id="IPR002126">
    <property type="entry name" value="Cadherin-like_dom"/>
</dbReference>
<dbReference type="InterPro" id="IPR015919">
    <property type="entry name" value="Cadherin-like_sf"/>
</dbReference>
<dbReference type="InterPro" id="IPR020894">
    <property type="entry name" value="Cadherin_CS"/>
</dbReference>
<dbReference type="InterPro" id="IPR000233">
    <property type="entry name" value="Cadherin_Y-type_LIR"/>
</dbReference>
<dbReference type="InterPro" id="IPR027397">
    <property type="entry name" value="Catenin-bd_sf"/>
</dbReference>
<dbReference type="PANTHER" id="PTHR24027">
    <property type="entry name" value="CADHERIN-23"/>
    <property type="match status" value="1"/>
</dbReference>
<dbReference type="PANTHER" id="PTHR24027:SF273">
    <property type="entry name" value="CADHERIN-8"/>
    <property type="match status" value="1"/>
</dbReference>
<dbReference type="Pfam" id="PF01049">
    <property type="entry name" value="CADH_Y-type_LIR"/>
    <property type="match status" value="1"/>
</dbReference>
<dbReference type="Pfam" id="PF00028">
    <property type="entry name" value="Cadherin"/>
    <property type="match status" value="5"/>
</dbReference>
<dbReference type="PRINTS" id="PR00205">
    <property type="entry name" value="CADHERIN"/>
</dbReference>
<dbReference type="SMART" id="SM00112">
    <property type="entry name" value="CA"/>
    <property type="match status" value="5"/>
</dbReference>
<dbReference type="SUPFAM" id="SSF49313">
    <property type="entry name" value="Cadherin-like"/>
    <property type="match status" value="5"/>
</dbReference>
<dbReference type="PROSITE" id="PS00232">
    <property type="entry name" value="CADHERIN_1"/>
    <property type="match status" value="3"/>
</dbReference>
<dbReference type="PROSITE" id="PS50268">
    <property type="entry name" value="CADHERIN_2"/>
    <property type="match status" value="5"/>
</dbReference>
<protein>
    <recommendedName>
        <fullName>Cadherin-8</fullName>
    </recommendedName>
</protein>
<organism>
    <name type="scientific">Mus musculus</name>
    <name type="common">Mouse</name>
    <dbReference type="NCBI Taxonomy" id="10090"/>
    <lineage>
        <taxon>Eukaryota</taxon>
        <taxon>Metazoa</taxon>
        <taxon>Chordata</taxon>
        <taxon>Craniata</taxon>
        <taxon>Vertebrata</taxon>
        <taxon>Euteleostomi</taxon>
        <taxon>Mammalia</taxon>
        <taxon>Eutheria</taxon>
        <taxon>Euarchontoglires</taxon>
        <taxon>Glires</taxon>
        <taxon>Rodentia</taxon>
        <taxon>Myomorpha</taxon>
        <taxon>Muroidea</taxon>
        <taxon>Muridae</taxon>
        <taxon>Murinae</taxon>
        <taxon>Mus</taxon>
        <taxon>Mus</taxon>
    </lineage>
</organism>
<keyword id="KW-0002">3D-structure</keyword>
<keyword id="KW-0106">Calcium</keyword>
<keyword id="KW-0130">Cell adhesion</keyword>
<keyword id="KW-1003">Cell membrane</keyword>
<keyword id="KW-0165">Cleavage on pair of basic residues</keyword>
<keyword id="KW-0325">Glycoprotein</keyword>
<keyword id="KW-0472">Membrane</keyword>
<keyword id="KW-0479">Metal-binding</keyword>
<keyword id="KW-0597">Phosphoprotein</keyword>
<keyword id="KW-1185">Reference proteome</keyword>
<keyword id="KW-0677">Repeat</keyword>
<keyword id="KW-0732">Signal</keyword>
<keyword id="KW-0812">Transmembrane</keyword>
<keyword id="KW-1133">Transmembrane helix</keyword>
<comment type="function">
    <text>Cadherins are calcium-dependent cell adhesion proteins. They preferentially interact with themselves in a homophilic manner in connecting cells; cadherins may thus contribute to the sorting of heterogeneous cell types.</text>
</comment>
<comment type="interaction">
    <interactant intactId="EBI-15719457">
        <id>P97291</id>
    </interactant>
    <interactant intactId="EBI-15719457">
        <id>P97291</id>
        <label>Cdh8</label>
    </interactant>
    <organismsDiffer>false</organismsDiffer>
    <experiments>2</experiments>
</comment>
<comment type="subcellular location">
    <subcellularLocation>
        <location>Cell membrane</location>
        <topology>Single-pass type I membrane protein</topology>
    </subcellularLocation>
</comment>
<comment type="domain">
    <text evidence="1">Three calcium ions are usually bound at the interface of each cadherin domain and rigidify the connections, imparting a strong curvature to the full-length ectodomain.</text>
</comment>